<dbReference type="EMBL" id="AL157959">
    <property type="protein sequence ID" value="CAM07439.1"/>
    <property type="molecule type" value="Genomic_DNA"/>
</dbReference>
<dbReference type="RefSeq" id="WP_002215432.1">
    <property type="nucleotide sequence ID" value="NC_003116.1"/>
</dbReference>
<dbReference type="SMR" id="P66168"/>
<dbReference type="EnsemblBacteria" id="CAM07439">
    <property type="protein sequence ID" value="CAM07439"/>
    <property type="gene ID" value="NMA0121"/>
</dbReference>
<dbReference type="GeneID" id="93387225"/>
<dbReference type="KEGG" id="nma:NMA0121"/>
<dbReference type="HOGENOM" id="CLU_158491_1_2_4"/>
<dbReference type="Proteomes" id="UP000000626">
    <property type="component" value="Chromosome"/>
</dbReference>
<dbReference type="GO" id="GO:0022625">
    <property type="term" value="C:cytosolic large ribosomal subunit"/>
    <property type="evidence" value="ECO:0007669"/>
    <property type="project" value="TreeGrafter"/>
</dbReference>
<dbReference type="GO" id="GO:0003735">
    <property type="term" value="F:structural constituent of ribosome"/>
    <property type="evidence" value="ECO:0007669"/>
    <property type="project" value="InterPro"/>
</dbReference>
<dbReference type="GO" id="GO:0006412">
    <property type="term" value="P:translation"/>
    <property type="evidence" value="ECO:0007669"/>
    <property type="project" value="UniProtKB-UniRule"/>
</dbReference>
<dbReference type="CDD" id="cd00427">
    <property type="entry name" value="Ribosomal_L29_HIP"/>
    <property type="match status" value="1"/>
</dbReference>
<dbReference type="FunFam" id="1.10.287.310:FF:000001">
    <property type="entry name" value="50S ribosomal protein L29"/>
    <property type="match status" value="1"/>
</dbReference>
<dbReference type="Gene3D" id="1.10.287.310">
    <property type="match status" value="1"/>
</dbReference>
<dbReference type="HAMAP" id="MF_00374">
    <property type="entry name" value="Ribosomal_uL29"/>
    <property type="match status" value="1"/>
</dbReference>
<dbReference type="InterPro" id="IPR050063">
    <property type="entry name" value="Ribosomal_protein_uL29"/>
</dbReference>
<dbReference type="InterPro" id="IPR001854">
    <property type="entry name" value="Ribosomal_uL29"/>
</dbReference>
<dbReference type="InterPro" id="IPR018254">
    <property type="entry name" value="Ribosomal_uL29_CS"/>
</dbReference>
<dbReference type="InterPro" id="IPR036049">
    <property type="entry name" value="Ribosomal_uL29_sf"/>
</dbReference>
<dbReference type="NCBIfam" id="TIGR00012">
    <property type="entry name" value="L29"/>
    <property type="match status" value="1"/>
</dbReference>
<dbReference type="PANTHER" id="PTHR10916">
    <property type="entry name" value="60S RIBOSOMAL PROTEIN L35/50S RIBOSOMAL PROTEIN L29"/>
    <property type="match status" value="1"/>
</dbReference>
<dbReference type="PANTHER" id="PTHR10916:SF0">
    <property type="entry name" value="LARGE RIBOSOMAL SUBUNIT PROTEIN UL29C"/>
    <property type="match status" value="1"/>
</dbReference>
<dbReference type="Pfam" id="PF00831">
    <property type="entry name" value="Ribosomal_L29"/>
    <property type="match status" value="1"/>
</dbReference>
<dbReference type="SUPFAM" id="SSF46561">
    <property type="entry name" value="Ribosomal protein L29 (L29p)"/>
    <property type="match status" value="1"/>
</dbReference>
<dbReference type="PROSITE" id="PS00579">
    <property type="entry name" value="RIBOSOMAL_L29"/>
    <property type="match status" value="1"/>
</dbReference>
<comment type="similarity">
    <text evidence="1">Belongs to the universal ribosomal protein uL29 family.</text>
</comment>
<accession>P66168</accession>
<accession>A1INY2</accession>
<accession>Q9JQX4</accession>
<evidence type="ECO:0000305" key="1"/>
<organism>
    <name type="scientific">Neisseria meningitidis serogroup A / serotype 4A (strain DSM 15465 / Z2491)</name>
    <dbReference type="NCBI Taxonomy" id="122587"/>
    <lineage>
        <taxon>Bacteria</taxon>
        <taxon>Pseudomonadati</taxon>
        <taxon>Pseudomonadota</taxon>
        <taxon>Betaproteobacteria</taxon>
        <taxon>Neisseriales</taxon>
        <taxon>Neisseriaceae</taxon>
        <taxon>Neisseria</taxon>
    </lineage>
</organism>
<feature type="chain" id="PRO_0000130426" description="Large ribosomal subunit protein uL29">
    <location>
        <begin position="1"/>
        <end position="63"/>
    </location>
</feature>
<sequence length="63" mass="7078">MKANELKDKSVEQLNADLLDLLKAQFGLRMQNATGQLGKPSELKRVRRDIARIKTVLTEKGAK</sequence>
<gene>
    <name type="primary">rpmC</name>
    <name type="ordered locus">NMA0121</name>
</gene>
<keyword id="KW-0687">Ribonucleoprotein</keyword>
<keyword id="KW-0689">Ribosomal protein</keyword>
<protein>
    <recommendedName>
        <fullName evidence="1">Large ribosomal subunit protein uL29</fullName>
    </recommendedName>
    <alternativeName>
        <fullName>50S ribosomal protein L29</fullName>
    </alternativeName>
</protein>
<proteinExistence type="inferred from homology"/>
<name>RL29_NEIMA</name>
<reference key="1">
    <citation type="journal article" date="2000" name="Nature">
        <title>Complete DNA sequence of a serogroup A strain of Neisseria meningitidis Z2491.</title>
        <authorList>
            <person name="Parkhill J."/>
            <person name="Achtman M."/>
            <person name="James K.D."/>
            <person name="Bentley S.D."/>
            <person name="Churcher C.M."/>
            <person name="Klee S.R."/>
            <person name="Morelli G."/>
            <person name="Basham D."/>
            <person name="Brown D."/>
            <person name="Chillingworth T."/>
            <person name="Davies R.M."/>
            <person name="Davis P."/>
            <person name="Devlin K."/>
            <person name="Feltwell T."/>
            <person name="Hamlin N."/>
            <person name="Holroyd S."/>
            <person name="Jagels K."/>
            <person name="Leather S."/>
            <person name="Moule S."/>
            <person name="Mungall K.L."/>
            <person name="Quail M.A."/>
            <person name="Rajandream M.A."/>
            <person name="Rutherford K.M."/>
            <person name="Simmonds M."/>
            <person name="Skelton J."/>
            <person name="Whitehead S."/>
            <person name="Spratt B.G."/>
            <person name="Barrell B.G."/>
        </authorList>
    </citation>
    <scope>NUCLEOTIDE SEQUENCE [LARGE SCALE GENOMIC DNA]</scope>
    <source>
        <strain>DSM 15465 / Z2491</strain>
    </source>
</reference>